<reference key="1">
    <citation type="journal article" date="2002" name="J. Virol.">
        <title>Analysis of hantavirus genetic diversity in Argentina: S segment-derived phylogeny.</title>
        <authorList>
            <person name="Bohlman M.C."/>
            <person name="Morzunov S.P."/>
            <person name="Meissner J."/>
            <person name="Taylor M.B."/>
            <person name="Ishibashi K."/>
            <person name="Rowe J."/>
            <person name="Levis S."/>
            <person name="Enria D."/>
            <person name="St Jeor S.C."/>
        </authorList>
    </citation>
    <scope>NUCLEOTIDE SEQUENCE [GENOMIC RNA]</scope>
    <source>
        <strain>Chile-9717869</strain>
    </source>
</reference>
<reference key="2">
    <citation type="journal article" date="2002" name="Virus Res.">
        <title>Complete nucleotide sequence of a Chilean hantavirus.</title>
        <authorList>
            <person name="Meissner J.D."/>
            <person name="Rowe J.E."/>
            <person name="Borucki M.K."/>
            <person name="St Jeor S.C."/>
        </authorList>
    </citation>
    <scope>NUCLEOTIDE SEQUENCE [LARGE SCALE GENOMIC DNA]</scope>
    <source>
        <strain>Chile-9717869</strain>
    </source>
</reference>
<reference key="3">
    <citation type="journal article" date="2005" name="Arch. Virol.">
        <title>L protein, the RNA-dependent RNA polymerase of hantaviruses.</title>
        <authorList>
            <person name="Kukkonen S.K."/>
            <person name="Vaheri A."/>
            <person name="Plyusnin A."/>
        </authorList>
    </citation>
    <scope>REVIEW</scope>
</reference>
<reference key="4">
    <citation type="journal article" date="2017" name="Crit. Rev. Microbiol.">
        <title>Bunyaviridae RdRps: structure, motifs, and RNA synthesis machinery.</title>
        <authorList>
            <person name="Amroun A."/>
            <person name="Priet S."/>
            <person name="de Lamballerie X."/>
            <person name="Querat G."/>
        </authorList>
    </citation>
    <scope>REVIEW</scope>
</reference>
<reference key="5">
    <citation type="journal article" date="2020" name="Trends Microbiol.">
        <title>The Cap-Snatching Mechanism of Bunyaviruses.</title>
        <authorList>
            <person name="Olschewski S."/>
            <person name="Cusack S."/>
            <person name="Rosenthal M."/>
        </authorList>
    </citation>
    <scope>REVIEW</scope>
</reference>
<reference evidence="14" key="6">
    <citation type="journal article" date="2016" name="PLoS Pathog.">
        <title>Atomic Structure and Biochemical Characterization of an RNA Endonuclease in the N Terminus of Andes Virus L Protein.</title>
        <authorList>
            <person name="Fernandez-Garcia Y."/>
            <person name="Reguera J."/>
            <person name="Busch C."/>
            <person name="Witte G."/>
            <person name="Sanchez-Ramos O."/>
            <person name="Betzel C."/>
            <person name="Cusack S."/>
            <person name="Guenther S."/>
            <person name="Reindl S."/>
        </authorList>
    </citation>
    <scope>X-RAY CRYSTALLOGRAPHY (2.95 ANGSTROMS) OF 1-200 IN COMPLEX WITH MANGANESE</scope>
    <scope>FUNCTION</scope>
    <scope>CATALYTIC ACTIVITY</scope>
    <scope>COFACTOR</scope>
    <scope>MUTAGENESIS OF ARG-35; HIS-36; ASP-40; ILE-43; LYS-44; ASN-50; PRO-96; ASP-97; ASN-98; GLU-110; LYS-124; LYS-127 AND ASN-167</scope>
    <source>
        <strain>Chile-9717869</strain>
    </source>
</reference>
<reference key="7">
    <citation type="journal article" date="2013" name="J. Virol.">
        <title>The N terminus of Andes virus L protein suppresses mRNA and protein expression in mammalian cells.</title>
        <authorList>
            <person name="Heinemann P."/>
            <person name="Schmidt-Chanasit J."/>
            <person name="Guenther S."/>
        </authorList>
    </citation>
    <scope>FUNCTION</scope>
    <source>
        <strain>Chile-9717869</strain>
    </source>
</reference>
<evidence type="ECO:0000250" key="1">
    <source>
        <dbReference type="UniProtKB" id="A2SZS3"/>
    </source>
</evidence>
<evidence type="ECO:0000250" key="2">
    <source>
        <dbReference type="UniProtKB" id="I0DF35"/>
    </source>
</evidence>
<evidence type="ECO:0000250" key="3">
    <source>
        <dbReference type="UniProtKB" id="P23456"/>
    </source>
</evidence>
<evidence type="ECO:0000250" key="4">
    <source>
        <dbReference type="UniProtKB" id="Q89709"/>
    </source>
</evidence>
<evidence type="ECO:0000250" key="5">
    <source>
        <dbReference type="UniProtKB" id="Q9YQR5"/>
    </source>
</evidence>
<evidence type="ECO:0000255" key="6">
    <source>
        <dbReference type="PROSITE-ProRule" id="PRU00539"/>
    </source>
</evidence>
<evidence type="ECO:0000269" key="7">
    <source>
    </source>
</evidence>
<evidence type="ECO:0000269" key="8">
    <source>
    </source>
</evidence>
<evidence type="ECO:0000269" key="9">
    <source>
    </source>
</evidence>
<evidence type="ECO:0000269" key="10">
    <source>
    </source>
</evidence>
<evidence type="ECO:0000303" key="11">
    <source>
    </source>
</evidence>
<evidence type="ECO:0000305" key="12"/>
<evidence type="ECO:0000305" key="13">
    <source>
    </source>
</evidence>
<evidence type="ECO:0007744" key="14">
    <source>
        <dbReference type="PDB" id="6Q99"/>
    </source>
</evidence>
<evidence type="ECO:0007829" key="15">
    <source>
        <dbReference type="PDB" id="6Q99"/>
    </source>
</evidence>
<sequence length="2153" mass="246857">MEKYREIHQRVRDLAPGTVSALECIDLLDRLYAVRHDLVDQMIKHDWSDNKDVERPIGQVLLMAGIPNDIIQGMEKKIIPNSPSGQVLKSFFRMTPDNYKITGNLIEFIEVTVTADVSRGIREKKIKYEGGLQFVEHLLETESRKGNIPQPYKITFSVVAVKTDGSNISTQWPSRRNDGVVQHMRLVQADINYVREHLIKLDERASLEAMFNLKFHVSGPKLRYFNIPDYRPQQLCEPRIDNLIQYCKNWLTKEHKFVFKEVSGANVIQAFESHEQLHLQKYNESRKPRNFLLLQLTVQGAYLPSTISSDQCNTRIGCLEISKNQPETPVQMLALDISYKYLSLTRDELINYYSPRVHFQSSPNVKEPGTLKLGLSQLNPLSKSILDNVGKHKKDKGLFGEIIDSINVASQIQINACAKIIEQILSNLEINIGEINASMPSPNKTTGVDDLLNKFYDNELGKYMLSILRKTAAWHIGHLVRDITESLIAHAGLRRSKYWSVHAYDHGNVILFILPSKSLEVVGSYIRYFTVFKDGIGLIDADNIDSKAEIDGVTWCYSKVMSIDLNRLLALNIAFEKSLLATATWFQYYTEDQGHFPLQHALRSIFSFHFLLCVSQKMKLCAIFDNLRYLIPSVTSLYSGYELLIEKFFERPFKSSLDVYLYSIIKSLLISLAQNNKVRFYSRVRLLGLTVDHSTVGASGVYPSLMSRVVYKHYRSLISEATTCFFLFEKGLHGNLPEEAKIHLETIEWARKFQEKEKQYGDILLKEGYTIESVINGEVDVEQQLFCQEVSELSAQELNKYLQAKSQVLCANIMNKHWDKPYFSQTRNISLKGMSGALQEDGHLAASVTLIEAIRFLNRSQTNPNVIDMYEQTKQSKAQARIVRKYQRTEADRGFFITTLPTRVRLEIIEDYFDAIAKVVPEEYISYGGDKKVLNIQNALEKALRWASGVSEITTSTGKSIKFKRKLMYVSADATKWSPGDNSAKFRRFTQAIYDGLSDNKLKCCVVDALRNIYETEFFMSRKLHRYIDSMENHSDAVEDFLAFFSNGVSANVKGNWLQGNLNKCSSLFGAAVSLLFREVWKQLFPELECFFEFAHHSDDALFIYGYLEPEDDGTDWFLYVSQQIQAGNFHWHAINQEMWKSMFNLHEHLLLMGSIKVSPKKTTVSPTNAEFLSTFFEGCAVSIPFVKILLGSLSDLPGLGFFDDLAAAQSRCVKSLDLGACPQLAQLAIVLCTSKVERLYGTADGMVNSPTAFLKVNKAHVPVPLGGDGSMSIMELATAGFGMADKNILKNAFISYKHTRRDGDRYVLGLFKFLMSLSEDVFQHDRLGEFSFVGKVQWKVFTPKAEFEFHDQFSHNYLLEWTRQHPVYDYIIPRNRDNLLVYLVRKLNDPSIITAMTMQSPLQLRFRMQAKQHMKVCRYEGEWVTFREVLAAADSFATSYQPTERDMDLFNTLVSCTFSKEYAWKDFLNEVRCEVLTTRHVHRPKIARTFTVREKDQAIQNPINSVIGYKYALTVDEVSDVLDSAFFPESLSADLQVMKDGVYRELGLDISSPEVLKRIAPLLYKAGRSRVVIVEGNVEGTAESICSYWLKTMSLIKTIRVRPKKEVLKAMSLYSVKENIGLQDDIAATRLCIEIWRWCKANEQDVKEWLTSLYFEKQTLMDWVERFRRKGVVPIDPEIQCIGLLLYDVLGYKSVLQMQANRRAYSGKQYDAYCVQTYNEETKLYEGDLRVTFNFGLDCARLEVFWDKKEYILETSITQRHVLRLLMEEVSQELIRCGMRFKTEQVNQTRSLVLFKTEAGFEWGKPNVPCIVYKHCVLRTGLRTKQPINKEFMINVQSDGFRAIAQMDIESPRFLLAHAYHTLRDIRYQAVQAVGNVWFKTEQHKLFINPIISSGLLENFMKGLPAAIPPAAYSLIMNKAKISVDLFMFNELLALINRNNILNLDGIEETSEGYSTVTSMSSKQWSEEMSLMSDDDIDDMEDFTIALDDIDFEQINLEEDIQHFLQDESAYVGDLLIQTEDIEVKKIRGVTRVLEPVKLLKSWVSKGLAIDKVYNPIGIILMARYMSKTYNFSSTPLALLNPYDLTELESVVKGWGETVNDRFKDLDIEAQTVVKEKGVQPEDVLPDSLFSFRHVDVLLRRLFPRDPVSTFY</sequence>
<accession>Q9E005</accession>
<organismHost>
    <name type="scientific">Abrothrix longipilis</name>
    <name type="common">Long-haired grass mouse</name>
    <name type="synonym">Akodon longipilis</name>
    <dbReference type="NCBI Taxonomy" id="29094"/>
</organismHost>
<organismHost>
    <name type="scientific">Homo sapiens</name>
    <name type="common">Human</name>
    <dbReference type="NCBI Taxonomy" id="9606"/>
</organismHost>
<organismHost>
    <name type="scientific">Loxodontomys micropus</name>
    <name type="common">Southern big-eared mouse</name>
    <name type="synonym">Auliscomys micropus</name>
    <dbReference type="NCBI Taxonomy" id="89122"/>
</organismHost>
<organismHost>
    <name type="scientific">Oligoryzomys chacoensis</name>
    <name type="common">Chacoan pygmy rice rat</name>
    <dbReference type="NCBI Taxonomy" id="37015"/>
</organismHost>
<organismHost>
    <name type="scientific">Oligoryzomys flavescens</name>
    <name type="common">yellow pygmy rice rat</name>
    <dbReference type="NCBI Taxonomy" id="218824"/>
</organismHost>
<organismHost>
    <name type="scientific">Oligoryzomys longicaudatus</name>
    <name type="common">Long-tailed pygmy rice rat</name>
    <dbReference type="NCBI Taxonomy" id="137207"/>
</organismHost>
<organismHost>
    <name type="scientific">Oligoryzomys sp.</name>
    <dbReference type="NCBI Taxonomy" id="37019"/>
</organismHost>
<organism>
    <name type="scientific">Andes orthohantavirus</name>
    <name type="common">ANDV</name>
    <name type="synonym">Andes virus</name>
    <dbReference type="NCBI Taxonomy" id="1980456"/>
    <lineage>
        <taxon>Viruses</taxon>
        <taxon>Riboviria</taxon>
        <taxon>Orthornavirae</taxon>
        <taxon>Negarnaviricota</taxon>
        <taxon>Polyploviricotina</taxon>
        <taxon>Ellioviricetes</taxon>
        <taxon>Bunyavirales</taxon>
        <taxon>Hantaviridae</taxon>
        <taxon>Mammantavirinae</taxon>
        <taxon>Orthohantavirus</taxon>
    </lineage>
</organism>
<proteinExistence type="evidence at protein level"/>
<protein>
    <recommendedName>
        <fullName>RNA-directed RNA polymerase L</fullName>
        <shortName>Protein L</shortName>
        <ecNumber evidence="6">2.7.7.48</ecNumber>
    </recommendedName>
    <alternativeName>
        <fullName>Large structural protein</fullName>
    </alternativeName>
    <alternativeName>
        <fullName evidence="12">RdRp</fullName>
    </alternativeName>
    <alternativeName>
        <fullName>Replicase</fullName>
    </alternativeName>
    <alternativeName>
        <fullName>Transcriptase</fullName>
    </alternativeName>
    <domain>
        <recommendedName>
            <fullName>cap-snatching endonuclease</fullName>
            <ecNumber evidence="9">3.1.-.-</ecNumber>
        </recommendedName>
    </domain>
</protein>
<dbReference type="EC" id="2.7.7.48" evidence="6"/>
<dbReference type="EC" id="3.1.-.-" evidence="9"/>
<dbReference type="EMBL" id="AF291704">
    <property type="protein sequence ID" value="AAG22533.4"/>
    <property type="molecule type" value="Genomic_RNA"/>
</dbReference>
<dbReference type="RefSeq" id="NP_604473.1">
    <property type="nucleotide sequence ID" value="NC_003468.2"/>
</dbReference>
<dbReference type="PDB" id="6Q99">
    <property type="method" value="X-ray"/>
    <property type="resolution" value="2.95 A"/>
    <property type="chains" value="A=1-200"/>
</dbReference>
<dbReference type="PDBsum" id="6Q99"/>
<dbReference type="SMR" id="Q9E005"/>
<dbReference type="GeneID" id="991234"/>
<dbReference type="KEGG" id="vg:991234"/>
<dbReference type="GO" id="GO:0044220">
    <property type="term" value="C:host cell perinuclear region of cytoplasm"/>
    <property type="evidence" value="ECO:0007669"/>
    <property type="project" value="UniProtKB-SubCell"/>
</dbReference>
<dbReference type="GO" id="GO:0004519">
    <property type="term" value="F:endonuclease activity"/>
    <property type="evidence" value="ECO:0007669"/>
    <property type="project" value="UniProtKB-KW"/>
</dbReference>
<dbReference type="GO" id="GO:0046872">
    <property type="term" value="F:metal ion binding"/>
    <property type="evidence" value="ECO:0007669"/>
    <property type="project" value="UniProtKB-KW"/>
</dbReference>
<dbReference type="GO" id="GO:0000166">
    <property type="term" value="F:nucleotide binding"/>
    <property type="evidence" value="ECO:0007669"/>
    <property type="project" value="UniProtKB-KW"/>
</dbReference>
<dbReference type="GO" id="GO:0003968">
    <property type="term" value="F:RNA-directed RNA polymerase activity"/>
    <property type="evidence" value="ECO:0007669"/>
    <property type="project" value="UniProtKB-KW"/>
</dbReference>
<dbReference type="GO" id="GO:0075526">
    <property type="term" value="P:cap snatching"/>
    <property type="evidence" value="ECO:0007669"/>
    <property type="project" value="UniProtKB-KW"/>
</dbReference>
<dbReference type="GO" id="GO:0006351">
    <property type="term" value="P:DNA-templated transcription"/>
    <property type="evidence" value="ECO:0007669"/>
    <property type="project" value="InterPro"/>
</dbReference>
<dbReference type="GO" id="GO:0039694">
    <property type="term" value="P:viral RNA genome replication"/>
    <property type="evidence" value="ECO:0007669"/>
    <property type="project" value="InterPro"/>
</dbReference>
<dbReference type="InterPro" id="IPR048006">
    <property type="entry name" value="CapSnatch_bunyavir"/>
</dbReference>
<dbReference type="InterPro" id="IPR054155">
    <property type="entry name" value="CapSnatchArena_N"/>
</dbReference>
<dbReference type="InterPro" id="IPR016268">
    <property type="entry name" value="RNA-dir_pol_hantavirus"/>
</dbReference>
<dbReference type="InterPro" id="IPR024378">
    <property type="entry name" value="RNA-dir_pol_N_hantavirus"/>
</dbReference>
<dbReference type="InterPro" id="IPR007099">
    <property type="entry name" value="RNA-dir_pol_NSvirus"/>
</dbReference>
<dbReference type="InterPro" id="IPR007322">
    <property type="entry name" value="RNA_pol_bunyavir"/>
</dbReference>
<dbReference type="NCBIfam" id="TIGR04202">
    <property type="entry name" value="capSnatchArena"/>
    <property type="match status" value="1"/>
</dbReference>
<dbReference type="Pfam" id="PF04196">
    <property type="entry name" value="Bunya_RdRp"/>
    <property type="match status" value="1"/>
</dbReference>
<dbReference type="Pfam" id="PF21991">
    <property type="entry name" value="capSnatchArena"/>
    <property type="match status" value="1"/>
</dbReference>
<dbReference type="Pfam" id="PF12426">
    <property type="entry name" value="DUF3674"/>
    <property type="match status" value="1"/>
</dbReference>
<dbReference type="PIRSF" id="PIRSF000825">
    <property type="entry name" value="L_HantaV"/>
    <property type="match status" value="1"/>
</dbReference>
<dbReference type="PROSITE" id="PS50525">
    <property type="entry name" value="RDRP_SSRNA_NEG_SEG"/>
    <property type="match status" value="1"/>
</dbReference>
<keyword id="KW-0002">3D-structure</keyword>
<keyword id="KW-1157">Cap snatching</keyword>
<keyword id="KW-0255">Endonuclease</keyword>
<keyword id="KW-1035">Host cytoplasm</keyword>
<keyword id="KW-0378">Hydrolase</keyword>
<keyword id="KW-0460">Magnesium</keyword>
<keyword id="KW-0464">Manganese</keyword>
<keyword id="KW-0479">Metal-binding</keyword>
<keyword id="KW-0540">Nuclease</keyword>
<keyword id="KW-0547">Nucleotide-binding</keyword>
<keyword id="KW-0548">Nucleotidyltransferase</keyword>
<keyword id="KW-0696">RNA-directed RNA polymerase</keyword>
<keyword id="KW-0808">Transferase</keyword>
<keyword id="KW-0693">Viral RNA replication</keyword>
<feature type="chain" id="PRO_0000455190" description="RNA-directed RNA polymerase L">
    <location>
        <begin position="1"/>
        <end position="2153"/>
    </location>
</feature>
<feature type="domain" description="RdRp catalytic" evidence="6">
    <location>
        <begin position="957"/>
        <end position="1143"/>
    </location>
</feature>
<feature type="active site" description="For endonuclease activity" evidence="3">
    <location>
        <position position="124"/>
    </location>
</feature>
<feature type="binding site" evidence="13">
    <location>
        <position position="36"/>
    </location>
    <ligand>
        <name>Mn(2+)</name>
        <dbReference type="ChEBI" id="CHEBI:29035"/>
        <label>1</label>
    </ligand>
</feature>
<feature type="binding site" evidence="3">
    <location>
        <position position="54"/>
    </location>
    <ligand>
        <name>Mn(2+)</name>
        <dbReference type="ChEBI" id="CHEBI:29035"/>
        <label>2</label>
    </ligand>
</feature>
<feature type="binding site" evidence="13">
    <location>
        <position position="97"/>
    </location>
    <ligand>
        <name>Mn(2+)</name>
        <dbReference type="ChEBI" id="CHEBI:29035"/>
        <label>1</label>
    </ligand>
</feature>
<feature type="binding site" evidence="13">
    <location>
        <position position="97"/>
    </location>
    <ligand>
        <name>Mn(2+)</name>
        <dbReference type="ChEBI" id="CHEBI:29035"/>
        <label>2</label>
    </ligand>
</feature>
<feature type="binding site" evidence="13">
    <location>
        <position position="110"/>
    </location>
    <ligand>
        <name>Mn(2+)</name>
        <dbReference type="ChEBI" id="CHEBI:29035"/>
        <label>1</label>
    </ligand>
</feature>
<feature type="binding site" evidence="13">
    <location>
        <position position="111"/>
    </location>
    <ligand>
        <name>Mn(2+)</name>
        <dbReference type="ChEBI" id="CHEBI:29035"/>
        <label>1</label>
    </ligand>
</feature>
<feature type="binding site" evidence="2">
    <location>
        <position position="1100"/>
    </location>
    <ligand>
        <name>Mg(2+)</name>
        <dbReference type="ChEBI" id="CHEBI:18420"/>
        <note>catalytic; for RdRp activity</note>
    </ligand>
</feature>
<feature type="mutagenesis site" description="Almost complete loss of cap-snatching endonuclease activity." evidence="7">
    <original>R</original>
    <variation>H</variation>
    <location>
        <position position="35"/>
    </location>
</feature>
<feature type="mutagenesis site" description="Complete loss of cap-snatching endonuclease activity." evidence="7">
    <original>H</original>
    <variation>R</variation>
    <location>
        <position position="36"/>
    </location>
</feature>
<feature type="mutagenesis site" description="80% loss of cap-snatching endonuclease activity." evidence="7">
    <original>D</original>
    <variation>E</variation>
    <location>
        <position position="40"/>
    </location>
</feature>
<feature type="mutagenesis site" description="70% loss of cap-snatching endonuclease activity." evidence="7">
    <original>I</original>
    <variation>A</variation>
    <location>
        <position position="43"/>
    </location>
</feature>
<feature type="mutagenesis site" description="60% loss of cap-snatching endonuclease activity." evidence="7">
    <original>K</original>
    <variation>A</variation>
    <location>
        <position position="44"/>
    </location>
</feature>
<feature type="mutagenesis site" description="Strongly reduced cap-snatching endonuclease activity." evidence="7">
    <original>N</original>
    <variation>A</variation>
    <location>
        <position position="50"/>
    </location>
</feature>
<feature type="mutagenesis site" description="Strongly reduced cap-snatching endonuclease activity." evidence="7">
    <original>P</original>
    <variation>A</variation>
    <location>
        <position position="96"/>
    </location>
</feature>
<feature type="mutagenesis site" description="Complete loss of cap-snatching endonuclease activity." evidence="7">
    <original>D</original>
    <variation>E</variation>
    <location>
        <position position="97"/>
    </location>
</feature>
<feature type="mutagenesis site" description="60% loss of cap-snatching endonuclease activity." evidence="7">
    <original>N</original>
    <variation>A</variation>
    <location>
        <position position="98"/>
    </location>
</feature>
<feature type="mutagenesis site" description="Complete loss of cap-snatching endonuclease activity." evidence="7">
    <original>E</original>
    <variation>A</variation>
    <location>
        <position position="110"/>
    </location>
</feature>
<feature type="mutagenesis site" description="Almost complete loss of cap-snatching endonuclease activity." evidence="7">
    <original>K</original>
    <variation>A</variation>
    <location>
        <position position="124"/>
    </location>
</feature>
<feature type="mutagenesis site" description="Almost complete loss of cap-snatching endonuclease activity." evidence="7">
    <original>K</original>
    <variation>A</variation>
    <location>
        <position position="127"/>
    </location>
</feature>
<feature type="mutagenesis site" description="No effect on cap-snatching endonuclease activity." evidence="7">
    <original>N</original>
    <variation>A</variation>
    <location>
        <position position="167"/>
    </location>
</feature>
<feature type="helix" evidence="15">
    <location>
        <begin position="1"/>
        <end position="12"/>
    </location>
</feature>
<feature type="strand" evidence="15">
    <location>
        <begin position="17"/>
        <end position="20"/>
    </location>
</feature>
<feature type="helix" evidence="15">
    <location>
        <begin position="24"/>
        <end position="46"/>
    </location>
</feature>
<feature type="strand" evidence="15">
    <location>
        <begin position="51"/>
        <end position="53"/>
    </location>
</feature>
<feature type="helix" evidence="15">
    <location>
        <begin position="57"/>
        <end position="63"/>
    </location>
</feature>
<feature type="helix" evidence="15">
    <location>
        <begin position="68"/>
        <end position="71"/>
    </location>
</feature>
<feature type="helix" evidence="15">
    <location>
        <begin position="74"/>
        <end position="76"/>
    </location>
</feature>
<feature type="helix" evidence="15">
    <location>
        <begin position="88"/>
        <end position="91"/>
    </location>
</feature>
<feature type="strand" evidence="15">
    <location>
        <begin position="97"/>
        <end position="102"/>
    </location>
</feature>
<feature type="strand" evidence="15">
    <location>
        <begin position="105"/>
        <end position="112"/>
    </location>
</feature>
<feature type="helix" evidence="15">
    <location>
        <begin position="117"/>
        <end position="127"/>
    </location>
</feature>
<feature type="helix" evidence="15">
    <location>
        <begin position="129"/>
        <end position="143"/>
    </location>
</feature>
<feature type="turn" evidence="15">
    <location>
        <begin position="144"/>
        <end position="146"/>
    </location>
</feature>
<feature type="strand" evidence="15">
    <location>
        <begin position="147"/>
        <end position="150"/>
    </location>
</feature>
<feature type="strand" evidence="15">
    <location>
        <begin position="153"/>
        <end position="160"/>
    </location>
</feature>
<feature type="helix" evidence="15">
    <location>
        <begin position="168"/>
        <end position="171"/>
    </location>
</feature>
<feature type="helix" evidence="15">
    <location>
        <begin position="177"/>
        <end position="195"/>
    </location>
</feature>
<feature type="turn" evidence="15">
    <location>
        <begin position="196"/>
        <end position="198"/>
    </location>
</feature>
<name>L_ANDV</name>
<comment type="function">
    <text evidence="8 9 13">RNA-dependent RNA polymerase, which is responsible for the replication and transcription of the viral RNA genome using antigenomic RNA as an intermediate. During transcription, synthesizes subgenomic RNAs and assures their capping by a cap-snatching mechanism, which involves the endonuclease activity cleaving the host capped pre-mRNAs (Probable). These short capped RNAs are then used as primers for viral transcription. Cleaves ssRNA substrates but not DNA (PubMed:27300328). Seems to downregulate the expression of its own and heterologous mRNAs through its endonuclease activity (PubMed:23576516).</text>
</comment>
<comment type="catalytic activity">
    <reaction evidence="6 9">
        <text>RNA(n) + a ribonucleoside 5'-triphosphate = RNA(n+1) + diphosphate</text>
        <dbReference type="Rhea" id="RHEA:21248"/>
        <dbReference type="Rhea" id="RHEA-COMP:14527"/>
        <dbReference type="Rhea" id="RHEA-COMP:17342"/>
        <dbReference type="ChEBI" id="CHEBI:33019"/>
        <dbReference type="ChEBI" id="CHEBI:61557"/>
        <dbReference type="ChEBI" id="CHEBI:140395"/>
        <dbReference type="EC" id="2.7.7.48"/>
    </reaction>
</comment>
<comment type="cofactor">
    <cofactor evidence="9">
        <name>Mn(2+)</name>
        <dbReference type="ChEBI" id="CHEBI:29035"/>
    </cofactor>
    <text evidence="3 10">For endonuclease activity. Binds 2 Mn2+ ions in the active site. The divalent metal ions are crucial for catalytic activity (PubMed:31948728).</text>
</comment>
<comment type="cofactor">
    <cofactor evidence="1">
        <name>Mg(2+)</name>
        <dbReference type="ChEBI" id="CHEBI:18420"/>
    </cofactor>
    <cofactor evidence="1">
        <name>Mn(2+)</name>
        <dbReference type="ChEBI" id="CHEBI:29035"/>
    </cofactor>
    <text evidence="1">For polymerase activity.</text>
</comment>
<comment type="subunit">
    <text evidence="4">Interacts with the viral nucleoprotein.</text>
</comment>
<comment type="subcellular location">
    <subcellularLocation>
        <location evidence="5">Host cytoplasm</location>
        <location evidence="5">Host perinuclear region</location>
    </subcellularLocation>
</comment>
<comment type="domain">
    <text evidence="1 2 9">The N-terminus contains the endonuclease activity (endoN) (PubMed:27300328). The central region contains the RdRp activity (By similarity). The C-terminus contains the cap-binding region (By similarity).</text>
</comment>
<comment type="miscellaneous">
    <text evidence="11">Classified as His(+) endonuclease since it has a histidine upstream of the active site that coordinates the first cation.</text>
</comment>
<comment type="similarity">
    <text evidence="12">Belongs to the Bunyavirales RNA polymerase family.</text>
</comment>